<sequence length="398" mass="43790">MLNNKRLFTSESVTEGHPDKIADQVSDAILDAILKDDPNARVACETTVTTGMALIAGEISTTTYVDIPKVVRETIKEIGYTRAKYGYDYETMAILTAIDEQSPDIAQGVDKALEYRDKDSEEEIEATGAGDQGLMFGYATNETETYMPLAIYLSHQLAKRLSDVRKDGTLNYLRPDGKVQVTVEYDENDNPVRIDTIVVSTQHADDVTLEQIQEDIKAHVIYPTVPENLINEQTKFYINPTGRFVIGGPQGDAGLTGRKIIVDTYGGYARHGGGCFSGKDPTKVDRSAAYAARYVAKNIVAAGLADQCEVQLAYAIGVAEPVSIAIDTFGTGKVSEGQLVEAVRKHFDLRPAGIIKMLDLKQPIYKQTAAYGHFGRTDVLFPWEKLDKVEELKDAVKY</sequence>
<protein>
    <recommendedName>
        <fullName evidence="1">S-adenosylmethionine synthase</fullName>
        <shortName evidence="1">AdoMet synthase</shortName>
        <ecNumber evidence="1">2.5.1.6</ecNumber>
    </recommendedName>
    <alternativeName>
        <fullName evidence="1">MAT</fullName>
    </alternativeName>
    <alternativeName>
        <fullName evidence="1">Methionine adenosyltransferase</fullName>
    </alternativeName>
</protein>
<name>METK_STAAN</name>
<organism>
    <name type="scientific">Staphylococcus aureus (strain N315)</name>
    <dbReference type="NCBI Taxonomy" id="158879"/>
    <lineage>
        <taxon>Bacteria</taxon>
        <taxon>Bacillati</taxon>
        <taxon>Bacillota</taxon>
        <taxon>Bacilli</taxon>
        <taxon>Bacillales</taxon>
        <taxon>Staphylococcaceae</taxon>
        <taxon>Staphylococcus</taxon>
    </lineage>
</organism>
<dbReference type="EC" id="2.5.1.6" evidence="1"/>
<dbReference type="EMBL" id="BA000018">
    <property type="protein sequence ID" value="BAB42876.1"/>
    <property type="molecule type" value="Genomic_DNA"/>
</dbReference>
<dbReference type="PIR" id="F89964">
    <property type="entry name" value="F89964"/>
</dbReference>
<dbReference type="RefSeq" id="WP_000933820.1">
    <property type="nucleotide sequence ID" value="NC_002745.2"/>
</dbReference>
<dbReference type="SMR" id="P66767"/>
<dbReference type="EnsemblBacteria" id="BAB42876">
    <property type="protein sequence ID" value="BAB42876"/>
    <property type="gene ID" value="BAB42876"/>
</dbReference>
<dbReference type="KEGG" id="sau:SA1608"/>
<dbReference type="HOGENOM" id="CLU_041802_1_1_9"/>
<dbReference type="UniPathway" id="UPA00315">
    <property type="reaction ID" value="UER00080"/>
</dbReference>
<dbReference type="GO" id="GO:0005737">
    <property type="term" value="C:cytoplasm"/>
    <property type="evidence" value="ECO:0007669"/>
    <property type="project" value="UniProtKB-SubCell"/>
</dbReference>
<dbReference type="GO" id="GO:0005524">
    <property type="term" value="F:ATP binding"/>
    <property type="evidence" value="ECO:0007669"/>
    <property type="project" value="UniProtKB-UniRule"/>
</dbReference>
<dbReference type="GO" id="GO:0000287">
    <property type="term" value="F:magnesium ion binding"/>
    <property type="evidence" value="ECO:0007669"/>
    <property type="project" value="UniProtKB-UniRule"/>
</dbReference>
<dbReference type="GO" id="GO:0004478">
    <property type="term" value="F:methionine adenosyltransferase activity"/>
    <property type="evidence" value="ECO:0007669"/>
    <property type="project" value="UniProtKB-UniRule"/>
</dbReference>
<dbReference type="GO" id="GO:0006730">
    <property type="term" value="P:one-carbon metabolic process"/>
    <property type="evidence" value="ECO:0007669"/>
    <property type="project" value="UniProtKB-KW"/>
</dbReference>
<dbReference type="GO" id="GO:0006556">
    <property type="term" value="P:S-adenosylmethionine biosynthetic process"/>
    <property type="evidence" value="ECO:0007669"/>
    <property type="project" value="UniProtKB-UniRule"/>
</dbReference>
<dbReference type="CDD" id="cd18079">
    <property type="entry name" value="S-AdoMet_synt"/>
    <property type="match status" value="1"/>
</dbReference>
<dbReference type="FunFam" id="3.30.300.10:FF:000003">
    <property type="entry name" value="S-adenosylmethionine synthase"/>
    <property type="match status" value="1"/>
</dbReference>
<dbReference type="FunFam" id="3.30.300.10:FF:000004">
    <property type="entry name" value="S-adenosylmethionine synthase"/>
    <property type="match status" value="1"/>
</dbReference>
<dbReference type="Gene3D" id="3.30.300.10">
    <property type="match status" value="3"/>
</dbReference>
<dbReference type="HAMAP" id="MF_00086">
    <property type="entry name" value="S_AdoMet_synth1"/>
    <property type="match status" value="1"/>
</dbReference>
<dbReference type="InterPro" id="IPR022631">
    <property type="entry name" value="ADOMET_SYNTHASE_CS"/>
</dbReference>
<dbReference type="InterPro" id="IPR022630">
    <property type="entry name" value="S-AdoMet_synt_C"/>
</dbReference>
<dbReference type="InterPro" id="IPR022629">
    <property type="entry name" value="S-AdoMet_synt_central"/>
</dbReference>
<dbReference type="InterPro" id="IPR022628">
    <property type="entry name" value="S-AdoMet_synt_N"/>
</dbReference>
<dbReference type="InterPro" id="IPR002133">
    <property type="entry name" value="S-AdoMet_synthetase"/>
</dbReference>
<dbReference type="InterPro" id="IPR022636">
    <property type="entry name" value="S-AdoMet_synthetase_sfam"/>
</dbReference>
<dbReference type="NCBIfam" id="TIGR01034">
    <property type="entry name" value="metK"/>
    <property type="match status" value="1"/>
</dbReference>
<dbReference type="PANTHER" id="PTHR11964">
    <property type="entry name" value="S-ADENOSYLMETHIONINE SYNTHETASE"/>
    <property type="match status" value="1"/>
</dbReference>
<dbReference type="Pfam" id="PF02773">
    <property type="entry name" value="S-AdoMet_synt_C"/>
    <property type="match status" value="1"/>
</dbReference>
<dbReference type="Pfam" id="PF02772">
    <property type="entry name" value="S-AdoMet_synt_M"/>
    <property type="match status" value="1"/>
</dbReference>
<dbReference type="Pfam" id="PF00438">
    <property type="entry name" value="S-AdoMet_synt_N"/>
    <property type="match status" value="1"/>
</dbReference>
<dbReference type="PIRSF" id="PIRSF000497">
    <property type="entry name" value="MAT"/>
    <property type="match status" value="1"/>
</dbReference>
<dbReference type="SUPFAM" id="SSF55973">
    <property type="entry name" value="S-adenosylmethionine synthetase"/>
    <property type="match status" value="3"/>
</dbReference>
<dbReference type="PROSITE" id="PS00376">
    <property type="entry name" value="ADOMET_SYNTHASE_1"/>
    <property type="match status" value="1"/>
</dbReference>
<dbReference type="PROSITE" id="PS00377">
    <property type="entry name" value="ADOMET_SYNTHASE_2"/>
    <property type="match status" value="1"/>
</dbReference>
<evidence type="ECO:0000255" key="1">
    <source>
        <dbReference type="HAMAP-Rule" id="MF_00086"/>
    </source>
</evidence>
<comment type="function">
    <text evidence="1">Catalyzes the formation of S-adenosylmethionine (AdoMet) from methionine and ATP. The overall synthetic reaction is composed of two sequential steps, AdoMet formation and the subsequent tripolyphosphate hydrolysis which occurs prior to release of AdoMet from the enzyme.</text>
</comment>
<comment type="catalytic activity">
    <reaction evidence="1">
        <text>L-methionine + ATP + H2O = S-adenosyl-L-methionine + phosphate + diphosphate</text>
        <dbReference type="Rhea" id="RHEA:21080"/>
        <dbReference type="ChEBI" id="CHEBI:15377"/>
        <dbReference type="ChEBI" id="CHEBI:30616"/>
        <dbReference type="ChEBI" id="CHEBI:33019"/>
        <dbReference type="ChEBI" id="CHEBI:43474"/>
        <dbReference type="ChEBI" id="CHEBI:57844"/>
        <dbReference type="ChEBI" id="CHEBI:59789"/>
        <dbReference type="EC" id="2.5.1.6"/>
    </reaction>
</comment>
<comment type="cofactor">
    <cofactor evidence="1">
        <name>Mg(2+)</name>
        <dbReference type="ChEBI" id="CHEBI:18420"/>
    </cofactor>
    <text evidence="1">Binds 2 divalent ions per subunit.</text>
</comment>
<comment type="cofactor">
    <cofactor evidence="1">
        <name>K(+)</name>
        <dbReference type="ChEBI" id="CHEBI:29103"/>
    </cofactor>
    <text evidence="1">Binds 1 potassium ion per subunit.</text>
</comment>
<comment type="pathway">
    <text evidence="1">Amino-acid biosynthesis; S-adenosyl-L-methionine biosynthesis; S-adenosyl-L-methionine from L-methionine: step 1/1.</text>
</comment>
<comment type="subunit">
    <text evidence="1">Homotetramer; dimer of dimers.</text>
</comment>
<comment type="subcellular location">
    <subcellularLocation>
        <location evidence="1">Cytoplasm</location>
    </subcellularLocation>
</comment>
<comment type="similarity">
    <text evidence="1">Belongs to the AdoMet synthase family.</text>
</comment>
<feature type="chain" id="PRO_0000174588" description="S-adenosylmethionine synthase">
    <location>
        <begin position="1"/>
        <end position="398"/>
    </location>
</feature>
<feature type="region of interest" description="Flexible loop" evidence="1">
    <location>
        <begin position="101"/>
        <end position="111"/>
    </location>
</feature>
<feature type="binding site" description="in other chain" evidence="1">
    <location>
        <position position="17"/>
    </location>
    <ligand>
        <name>ATP</name>
        <dbReference type="ChEBI" id="CHEBI:30616"/>
        <note>ligand shared between two neighboring subunits</note>
    </ligand>
</feature>
<feature type="binding site" evidence="1">
    <location>
        <position position="19"/>
    </location>
    <ligand>
        <name>Mg(2+)</name>
        <dbReference type="ChEBI" id="CHEBI:18420"/>
    </ligand>
</feature>
<feature type="binding site" evidence="1">
    <location>
        <position position="45"/>
    </location>
    <ligand>
        <name>K(+)</name>
        <dbReference type="ChEBI" id="CHEBI:29103"/>
    </ligand>
</feature>
<feature type="binding site" description="in other chain" evidence="1">
    <location>
        <position position="58"/>
    </location>
    <ligand>
        <name>L-methionine</name>
        <dbReference type="ChEBI" id="CHEBI:57844"/>
        <note>ligand shared between two neighboring subunits</note>
    </ligand>
</feature>
<feature type="binding site" description="in other chain" evidence="1">
    <location>
        <position position="101"/>
    </location>
    <ligand>
        <name>L-methionine</name>
        <dbReference type="ChEBI" id="CHEBI:57844"/>
        <note>ligand shared between two neighboring subunits</note>
    </ligand>
</feature>
<feature type="binding site" description="in other chain" evidence="1">
    <location>
        <begin position="176"/>
        <end position="178"/>
    </location>
    <ligand>
        <name>ATP</name>
        <dbReference type="ChEBI" id="CHEBI:30616"/>
        <note>ligand shared between two neighboring subunits</note>
    </ligand>
</feature>
<feature type="binding site" description="in other chain" evidence="1">
    <location>
        <begin position="243"/>
        <end position="244"/>
    </location>
    <ligand>
        <name>ATP</name>
        <dbReference type="ChEBI" id="CHEBI:30616"/>
        <note>ligand shared between two neighboring subunits</note>
    </ligand>
</feature>
<feature type="binding site" evidence="1">
    <location>
        <position position="252"/>
    </location>
    <ligand>
        <name>ATP</name>
        <dbReference type="ChEBI" id="CHEBI:30616"/>
        <note>ligand shared between two neighboring subunits</note>
    </ligand>
</feature>
<feature type="binding site" evidence="1">
    <location>
        <position position="252"/>
    </location>
    <ligand>
        <name>L-methionine</name>
        <dbReference type="ChEBI" id="CHEBI:57844"/>
        <note>ligand shared between two neighboring subunits</note>
    </ligand>
</feature>
<feature type="binding site" description="in other chain" evidence="1">
    <location>
        <begin position="258"/>
        <end position="259"/>
    </location>
    <ligand>
        <name>ATP</name>
        <dbReference type="ChEBI" id="CHEBI:30616"/>
        <note>ligand shared between two neighboring subunits</note>
    </ligand>
</feature>
<feature type="binding site" evidence="1">
    <location>
        <position position="279"/>
    </location>
    <ligand>
        <name>ATP</name>
        <dbReference type="ChEBI" id="CHEBI:30616"/>
        <note>ligand shared between two neighboring subunits</note>
    </ligand>
</feature>
<feature type="binding site" description="in other chain" evidence="1">
    <location>
        <position position="283"/>
    </location>
    <ligand>
        <name>L-methionine</name>
        <dbReference type="ChEBI" id="CHEBI:57844"/>
        <note>ligand shared between two neighboring subunits</note>
    </ligand>
</feature>
<accession>P66767</accession>
<accession>Q99T79</accession>
<reference key="1">
    <citation type="journal article" date="2001" name="Lancet">
        <title>Whole genome sequencing of meticillin-resistant Staphylococcus aureus.</title>
        <authorList>
            <person name="Kuroda M."/>
            <person name="Ohta T."/>
            <person name="Uchiyama I."/>
            <person name="Baba T."/>
            <person name="Yuzawa H."/>
            <person name="Kobayashi I."/>
            <person name="Cui L."/>
            <person name="Oguchi A."/>
            <person name="Aoki K."/>
            <person name="Nagai Y."/>
            <person name="Lian J.-Q."/>
            <person name="Ito T."/>
            <person name="Kanamori M."/>
            <person name="Matsumaru H."/>
            <person name="Maruyama A."/>
            <person name="Murakami H."/>
            <person name="Hosoyama A."/>
            <person name="Mizutani-Ui Y."/>
            <person name="Takahashi N.K."/>
            <person name="Sawano T."/>
            <person name="Inoue R."/>
            <person name="Kaito C."/>
            <person name="Sekimizu K."/>
            <person name="Hirakawa H."/>
            <person name="Kuhara S."/>
            <person name="Goto S."/>
            <person name="Yabuzaki J."/>
            <person name="Kanehisa M."/>
            <person name="Yamashita A."/>
            <person name="Oshima K."/>
            <person name="Furuya K."/>
            <person name="Yoshino C."/>
            <person name="Shiba T."/>
            <person name="Hattori M."/>
            <person name="Ogasawara N."/>
            <person name="Hayashi H."/>
            <person name="Hiramatsu K."/>
        </authorList>
    </citation>
    <scope>NUCLEOTIDE SEQUENCE [LARGE SCALE GENOMIC DNA]</scope>
    <source>
        <strain>N315</strain>
    </source>
</reference>
<reference key="2">
    <citation type="submission" date="2007-10" db="UniProtKB">
        <title>Shotgun proteomic analysis of total and membrane protein extracts of S. aureus strain N315.</title>
        <authorList>
            <person name="Vaezzadeh A.R."/>
            <person name="Deshusses J."/>
            <person name="Lescuyer P."/>
            <person name="Hochstrasser D.F."/>
        </authorList>
    </citation>
    <scope>IDENTIFICATION BY MASS SPECTROMETRY [LARGE SCALE ANALYSIS]</scope>
    <source>
        <strain>N315</strain>
    </source>
</reference>
<proteinExistence type="evidence at protein level"/>
<gene>
    <name evidence="1" type="primary">metK</name>
    <name type="ordered locus">SA1608</name>
</gene>
<keyword id="KW-0067">ATP-binding</keyword>
<keyword id="KW-0963">Cytoplasm</keyword>
<keyword id="KW-0460">Magnesium</keyword>
<keyword id="KW-0479">Metal-binding</keyword>
<keyword id="KW-0547">Nucleotide-binding</keyword>
<keyword id="KW-0554">One-carbon metabolism</keyword>
<keyword id="KW-0630">Potassium</keyword>
<keyword id="KW-0808">Transferase</keyword>